<feature type="chain" id="PRO_1000026393" description="Fluoride-specific ion channel FluC">
    <location>
        <begin position="1"/>
        <end position="127"/>
    </location>
</feature>
<feature type="transmembrane region" description="Helical" evidence="1">
    <location>
        <begin position="7"/>
        <end position="27"/>
    </location>
</feature>
<feature type="transmembrane region" description="Helical" evidence="1">
    <location>
        <begin position="37"/>
        <end position="57"/>
    </location>
</feature>
<feature type="transmembrane region" description="Helical" evidence="1">
    <location>
        <begin position="70"/>
        <end position="90"/>
    </location>
</feature>
<feature type="transmembrane region" description="Helical" evidence="1">
    <location>
        <begin position="102"/>
        <end position="122"/>
    </location>
</feature>
<feature type="binding site" evidence="1">
    <location>
        <position position="77"/>
    </location>
    <ligand>
        <name>Na(+)</name>
        <dbReference type="ChEBI" id="CHEBI:29101"/>
        <note>structural</note>
    </ligand>
</feature>
<feature type="binding site" evidence="1">
    <location>
        <position position="80"/>
    </location>
    <ligand>
        <name>Na(+)</name>
        <dbReference type="ChEBI" id="CHEBI:29101"/>
        <note>structural</note>
    </ligand>
</feature>
<name>FLUC_HISS1</name>
<accession>Q0I2K9</accession>
<protein>
    <recommendedName>
        <fullName evidence="1">Fluoride-specific ion channel FluC</fullName>
    </recommendedName>
</protein>
<organism>
    <name type="scientific">Histophilus somni (strain 129Pt)</name>
    <name type="common">Haemophilus somnus</name>
    <dbReference type="NCBI Taxonomy" id="205914"/>
    <lineage>
        <taxon>Bacteria</taxon>
        <taxon>Pseudomonadati</taxon>
        <taxon>Pseudomonadota</taxon>
        <taxon>Gammaproteobacteria</taxon>
        <taxon>Pasteurellales</taxon>
        <taxon>Pasteurellaceae</taxon>
        <taxon>Histophilus</taxon>
    </lineage>
</organism>
<keyword id="KW-0997">Cell inner membrane</keyword>
<keyword id="KW-1003">Cell membrane</keyword>
<keyword id="KW-0407">Ion channel</keyword>
<keyword id="KW-0406">Ion transport</keyword>
<keyword id="KW-0472">Membrane</keyword>
<keyword id="KW-0479">Metal-binding</keyword>
<keyword id="KW-0915">Sodium</keyword>
<keyword id="KW-0812">Transmembrane</keyword>
<keyword id="KW-1133">Transmembrane helix</keyword>
<keyword id="KW-0813">Transport</keyword>
<evidence type="ECO:0000255" key="1">
    <source>
        <dbReference type="HAMAP-Rule" id="MF_00454"/>
    </source>
</evidence>
<comment type="function">
    <text evidence="1">Fluoride-specific ion channel. Important for reducing fluoride concentration in the cell, thus reducing its toxicity.</text>
</comment>
<comment type="catalytic activity">
    <reaction evidence="1">
        <text>fluoride(in) = fluoride(out)</text>
        <dbReference type="Rhea" id="RHEA:76159"/>
        <dbReference type="ChEBI" id="CHEBI:17051"/>
    </reaction>
    <physiologicalReaction direction="left-to-right" evidence="1">
        <dbReference type="Rhea" id="RHEA:76160"/>
    </physiologicalReaction>
</comment>
<comment type="activity regulation">
    <text evidence="1">Na(+) is not transported, but it plays an essential structural role and its presence is essential for fluoride channel function.</text>
</comment>
<comment type="subcellular location">
    <subcellularLocation>
        <location evidence="1">Cell inner membrane</location>
        <topology evidence="1">Multi-pass membrane protein</topology>
    </subcellularLocation>
</comment>
<comment type="similarity">
    <text evidence="1">Belongs to the fluoride channel Fluc/FEX (TC 1.A.43) family.</text>
</comment>
<proteinExistence type="inferred from homology"/>
<dbReference type="EMBL" id="CP000436">
    <property type="protein sequence ID" value="ABI25051.1"/>
    <property type="molecule type" value="Genomic_DNA"/>
</dbReference>
<dbReference type="SMR" id="Q0I2K9"/>
<dbReference type="KEGG" id="hso:HS_0776"/>
<dbReference type="eggNOG" id="COG0239">
    <property type="taxonomic scope" value="Bacteria"/>
</dbReference>
<dbReference type="HOGENOM" id="CLU_114342_3_3_6"/>
<dbReference type="GO" id="GO:0005886">
    <property type="term" value="C:plasma membrane"/>
    <property type="evidence" value="ECO:0007669"/>
    <property type="project" value="UniProtKB-SubCell"/>
</dbReference>
<dbReference type="GO" id="GO:0062054">
    <property type="term" value="F:fluoride channel activity"/>
    <property type="evidence" value="ECO:0007669"/>
    <property type="project" value="UniProtKB-UniRule"/>
</dbReference>
<dbReference type="GO" id="GO:0046872">
    <property type="term" value="F:metal ion binding"/>
    <property type="evidence" value="ECO:0007669"/>
    <property type="project" value="UniProtKB-KW"/>
</dbReference>
<dbReference type="GO" id="GO:0140114">
    <property type="term" value="P:cellular detoxification of fluoride"/>
    <property type="evidence" value="ECO:0007669"/>
    <property type="project" value="UniProtKB-UniRule"/>
</dbReference>
<dbReference type="HAMAP" id="MF_00454">
    <property type="entry name" value="FluC"/>
    <property type="match status" value="1"/>
</dbReference>
<dbReference type="InterPro" id="IPR003691">
    <property type="entry name" value="FluC"/>
</dbReference>
<dbReference type="PANTHER" id="PTHR28259">
    <property type="entry name" value="FLUORIDE EXPORT PROTEIN 1-RELATED"/>
    <property type="match status" value="1"/>
</dbReference>
<dbReference type="PANTHER" id="PTHR28259:SF1">
    <property type="entry name" value="FLUORIDE EXPORT PROTEIN 1-RELATED"/>
    <property type="match status" value="1"/>
</dbReference>
<dbReference type="Pfam" id="PF02537">
    <property type="entry name" value="CRCB"/>
    <property type="match status" value="1"/>
</dbReference>
<sequence>MNLFTHLFLISCGASLGAMSRHGLTLLLNPLFTFLSFGTLIANYIGCLIMGIMLAMFWHSSAFSTEYRLFFVTGFLGSLTTFSAFSAEVIENLLQHKWLEGITITSLHILGCLFFTTLGVFIWRYFQ</sequence>
<reference key="1">
    <citation type="journal article" date="2007" name="J. Bacteriol.">
        <title>Complete genome sequence of Haemophilus somnus (Histophilus somni) strain 129Pt and comparison to Haemophilus ducreyi 35000HP and Haemophilus influenzae Rd.</title>
        <authorList>
            <person name="Challacombe J.F."/>
            <person name="Duncan A.J."/>
            <person name="Brettin T.S."/>
            <person name="Bruce D."/>
            <person name="Chertkov O."/>
            <person name="Detter J.C."/>
            <person name="Han C.S."/>
            <person name="Misra M."/>
            <person name="Richardson P."/>
            <person name="Tapia R."/>
            <person name="Thayer N."/>
            <person name="Xie G."/>
            <person name="Inzana T.J."/>
        </authorList>
    </citation>
    <scope>NUCLEOTIDE SEQUENCE [LARGE SCALE GENOMIC DNA]</scope>
    <source>
        <strain>129Pt</strain>
    </source>
</reference>
<gene>
    <name evidence="1" type="primary">fluC</name>
    <name evidence="1" type="synonym">crcB</name>
    <name type="ordered locus">HS_0776</name>
</gene>